<evidence type="ECO:0000269" key="1">
    <source>
    </source>
</evidence>
<evidence type="ECO:0000305" key="2"/>
<evidence type="ECO:0000305" key="3">
    <source>
    </source>
</evidence>
<sequence length="557" mass="59787">MSKLIRRVVTVLALTSMASSFASGKIEAAAAESLATRFIASTENSDDNVFQATAKKVRFGRNKNQRQEQKHTGAFCDKEFYPCEGGQCQPVDATQESCYGKMYCVRVNDDCNVEISQSVPEYATVGSPYPIEILAVGKKDCVNVVITQQLPCEVEFVSSDPATTPTSDSKLIWTIDRLGQGEKCKITVWVKPLKEGCCFTAATVCACPELRSYTKCGQPAICIKQEGPECACLRCPVCYKIEVCNTGSAIARNVVVDNPVPDGYTHASGQRVLSFNLGDMRPGDSKCFCVEFCPQKRGKVTNVATVSYCGGHKCSANVTTVVNEPCVQVNISGADWSYVCKPVEYTIVVSNPGDLKLYDVVIEDTAPSGATILEAAGAEICCNKAVWCIKEMCPGETLQFKVVAKAQSPGKFTNQVVVKTNSDCGTCTSCAEVTTHWKGLAATHMCVIDTNDPICVGENTVYRICVTNRGSAEDTNVSLILKFSKELQPVSSSGPTKGTITGNTVVFDALPKLGSKESVEFSVTLKGIAPGDARGEAILSSDTLTVPVADTENTHVY</sequence>
<protein>
    <recommendedName>
        <fullName>Large cysteine-rich periplasmic protein omcB</fullName>
        <shortName>Large-CRP</shortName>
    </recommendedName>
    <alternativeName>
        <fullName>60 kDa cysteine-rich OMP</fullName>
    </alternativeName>
    <alternativeName>
        <fullName>60 kDa outer membrane protein</fullName>
    </alternativeName>
    <alternativeName>
        <fullName>Cysteine-rich outer membrane protein</fullName>
    </alternativeName>
    <component>
        <recommendedName>
            <fullName>Large cysteine-rich periplasmic protein omcB-alpha</fullName>
        </recommendedName>
    </component>
    <component>
        <recommendedName>
            <fullName>Large cysteine-rich periplasmic protein omcB-beta</fullName>
        </recommendedName>
    </component>
</protein>
<keyword id="KW-0133">Cell shape</keyword>
<keyword id="KW-1015">Disulfide bond</keyword>
<keyword id="KW-0574">Periplasm</keyword>
<keyword id="KW-0732">Signal</keyword>
<proteinExistence type="evidence at protein level"/>
<comment type="function">
    <text>In elementary bodies (EBs, the infectious stage, which is able to survive outside the host cell) provides the structural integrity of the outer envelope through disulfide cross-links with the small cysteine-rich protein and the major outer membrane porin. It has been described in publications as the Sarkosyl-insoluble COMC (Chlamydia outer membrane complex), and serves as the functional equivalent of peptidoglycan.</text>
</comment>
<comment type="subunit">
    <text evidence="1">Part of a disulfide cross-linked outer membrane complex (COMC) composed of the major outer membrane porin (MOMP), the small cysteine-rich protein (omcA) and the large cysteine-rich periplasmic protein (omcB).</text>
</comment>
<comment type="subcellular location">
    <subcellularLocation>
        <location evidence="3">Periplasm</location>
    </subcellularLocation>
</comment>
<comment type="caution">
    <text evidence="2">Was thought to be an outer membrane protein as it is part of a disulfide cross-linked complex that is insoluble in the detergent Sarkosyl. In PubMed:7532170 it was shown to likely be periplasmic.</text>
</comment>
<name>OMCB_CHLP6</name>
<feature type="signal peptide">
    <location>
        <begin position="1"/>
        <end position="22"/>
    </location>
</feature>
<feature type="propeptide" id="PRO_0000410953">
    <location>
        <begin position="23"/>
        <end position="40"/>
    </location>
</feature>
<feature type="chain" id="PRO_0000410954" description="Large cysteine-rich periplasmic protein omcB-alpha">
    <location>
        <begin position="41"/>
        <end position="557"/>
    </location>
</feature>
<feature type="chain" id="PRO_0000410955" description="Large cysteine-rich periplasmic protein omcB-beta">
    <location>
        <begin position="58"/>
        <end position="557"/>
    </location>
</feature>
<gene>
    <name type="primary">omcB</name>
    <name type="synonym">envB</name>
    <name type="ordered locus">CPSIT_0208</name>
    <name type="ordered locus">G5O_0210</name>
</gene>
<accession>F0T377</accession>
<accession>P23701</accession>
<reference key="1">
    <citation type="journal article" date="1991" name="J. Bacteriol.">
        <title>Sequence analysis and lipid modification of the cysteine-rich envelope proteins of Chlamydia psittaci 6BC.</title>
        <authorList>
            <person name="Everett K.D.E."/>
            <person name="Hatch T.P."/>
        </authorList>
    </citation>
    <scope>NUCLEOTIDE SEQUENCE [GENOMIC DNA]</scope>
    <scope>DETECTION OF DOUBLET</scope>
    <scope>SUBUNIT</scope>
    <source>
        <strain>ATCC VR-125 / 6BC</strain>
    </source>
</reference>
<reference key="2">
    <citation type="journal article" date="2011" name="J. Bacteriol.">
        <title>Full-length de novo sequence of the Chlamydophila psittaci type strain, 6BC.</title>
        <authorList>
            <person name="Voigt A."/>
            <person name="Schofl G."/>
            <person name="Heidrich A."/>
            <person name="Sachse K."/>
            <person name="Saluz H.P."/>
        </authorList>
    </citation>
    <scope>NUCLEOTIDE SEQUENCE [LARGE SCALE GENOMIC DNA]</scope>
    <source>
        <strain>ATCC VR-125 / 6BC</strain>
    </source>
</reference>
<reference key="3">
    <citation type="journal article" date="2011" name="J. Bacteriol.">
        <title>Genome sequences of the zoonotic pathogens Chlamydia psittaci 6BC and Cal10.</title>
        <authorList>
            <person name="Grinblat-Huse V."/>
            <person name="Drabek E.F."/>
            <person name="Creasy H.H."/>
            <person name="Daugherty S.C."/>
            <person name="Jones K.M."/>
            <person name="Santana-Cruz I."/>
            <person name="Tallon L.J."/>
            <person name="Read T.D."/>
            <person name="Hatch T.P."/>
            <person name="Bavoil P."/>
            <person name="Myers G.S."/>
        </authorList>
    </citation>
    <scope>NUCLEOTIDE SEQUENCE [LARGE SCALE GENOMIC DNA]</scope>
    <source>
        <strain>ATCC VR-125 / 6BC</strain>
    </source>
</reference>
<reference key="4">
    <citation type="journal article" date="1995" name="J. Bacteriol.">
        <title>Architecture of the cell envelope of Chlamydia psittaci 6BC.</title>
        <authorList>
            <person name="Everett K.D.E."/>
            <person name="Hatch T.P."/>
        </authorList>
    </citation>
    <scope>SUBCELLULAR LOCATION</scope>
    <source>
        <strain>ATCC VR-125 / 6BC</strain>
    </source>
</reference>
<reference key="5">
    <citation type="unpublished observations" date="2006-07">
        <authorList>
            <person name="Everett K.D.E."/>
        </authorList>
    </citation>
    <scope>PROTEOLYTIC PROCESSING SITES</scope>
    <source>
        <strain>ATCC VR-125 / 6BC</strain>
    </source>
</reference>
<organism>
    <name type="scientific">Chlamydophila psittaci (strain ATCC VR-125 / 6BC)</name>
    <name type="common">Chlamydia psittaci</name>
    <dbReference type="NCBI Taxonomy" id="331636"/>
    <lineage>
        <taxon>Bacteria</taxon>
        <taxon>Pseudomonadati</taxon>
        <taxon>Chlamydiota</taxon>
        <taxon>Chlamydiia</taxon>
        <taxon>Chlamydiales</taxon>
        <taxon>Chlamydiaceae</taxon>
        <taxon>Chlamydia/Chlamydophila group</taxon>
        <taxon>Chlamydia</taxon>
    </lineage>
</organism>
<dbReference type="EMBL" id="M61116">
    <property type="protein sequence ID" value="AAB61619.1"/>
    <property type="molecule type" value="Genomic_DNA"/>
</dbReference>
<dbReference type="EMBL" id="CP002549">
    <property type="protein sequence ID" value="ADZ18457.1"/>
    <property type="molecule type" value="Genomic_DNA"/>
</dbReference>
<dbReference type="EMBL" id="CP002586">
    <property type="protein sequence ID" value="AEB55213.1"/>
    <property type="molecule type" value="Genomic_DNA"/>
</dbReference>
<dbReference type="PIR" id="B39439">
    <property type="entry name" value="B39439"/>
</dbReference>
<dbReference type="RefSeq" id="WP_013462604.1">
    <property type="nucleotide sequence ID" value="NC_017287.1"/>
</dbReference>
<dbReference type="GeneID" id="12242469"/>
<dbReference type="KEGG" id="chb:G5O_0210"/>
<dbReference type="KEGG" id="chp:CPSIT_0208"/>
<dbReference type="PATRIC" id="fig|331636.3.peg.196"/>
<dbReference type="HOGENOM" id="CLU_029611_0_0_0"/>
<dbReference type="GO" id="GO:0042597">
    <property type="term" value="C:periplasmic space"/>
    <property type="evidence" value="ECO:0007669"/>
    <property type="project" value="UniProtKB-SubCell"/>
</dbReference>
<dbReference type="GO" id="GO:0005201">
    <property type="term" value="F:extracellular matrix structural constituent"/>
    <property type="evidence" value="ECO:0007669"/>
    <property type="project" value="InterPro"/>
</dbReference>
<dbReference type="GO" id="GO:0008360">
    <property type="term" value="P:regulation of cell shape"/>
    <property type="evidence" value="ECO:0007669"/>
    <property type="project" value="UniProtKB-KW"/>
</dbReference>
<dbReference type="InterPro" id="IPR003506">
    <property type="entry name" value="Chlam_OMP6"/>
</dbReference>
<dbReference type="InterPro" id="IPR051172">
    <property type="entry name" value="Chlamydia_OmcB"/>
</dbReference>
<dbReference type="InterPro" id="IPR047589">
    <property type="entry name" value="DUF11_rpt"/>
</dbReference>
<dbReference type="InterPro" id="IPR001434">
    <property type="entry name" value="OmcB-like_DUF11"/>
</dbReference>
<dbReference type="NCBIfam" id="TIGR01451">
    <property type="entry name" value="B_ant_repeat"/>
    <property type="match status" value="1"/>
</dbReference>
<dbReference type="PANTHER" id="PTHR34819">
    <property type="entry name" value="LARGE CYSTEINE-RICH PERIPLASMIC PROTEIN OMCB"/>
    <property type="match status" value="1"/>
</dbReference>
<dbReference type="PANTHER" id="PTHR34819:SF4">
    <property type="entry name" value="LARGE CYSTEINE-RICH PERIPLASMIC PROTEIN OMCB"/>
    <property type="match status" value="1"/>
</dbReference>
<dbReference type="Pfam" id="PF03504">
    <property type="entry name" value="Chlam_OMP6"/>
    <property type="match status" value="1"/>
</dbReference>
<dbReference type="Pfam" id="PF01345">
    <property type="entry name" value="DUF11"/>
    <property type="match status" value="2"/>
</dbReference>
<dbReference type="PRINTS" id="PR01336">
    <property type="entry name" value="CHLAMIDIAOM6"/>
</dbReference>